<dbReference type="EMBL" id="CU928162">
    <property type="protein sequence ID" value="CAR09997.1"/>
    <property type="molecule type" value="Genomic_DNA"/>
</dbReference>
<dbReference type="RefSeq" id="WP_000903382.1">
    <property type="nucleotide sequence ID" value="NC_011745.1"/>
</dbReference>
<dbReference type="SMR" id="B7N0X9"/>
<dbReference type="KEGG" id="ecq:ECED1_4003"/>
<dbReference type="HOGENOM" id="CLU_166087_2_1_6"/>
<dbReference type="Proteomes" id="UP000000748">
    <property type="component" value="Chromosome"/>
</dbReference>
<dbReference type="GO" id="GO:1990228">
    <property type="term" value="C:sulfurtransferase complex"/>
    <property type="evidence" value="ECO:0007669"/>
    <property type="project" value="TreeGrafter"/>
</dbReference>
<dbReference type="GO" id="GO:0002143">
    <property type="term" value="P:tRNA wobble position uridine thiolation"/>
    <property type="evidence" value="ECO:0007669"/>
    <property type="project" value="InterPro"/>
</dbReference>
<dbReference type="FunFam" id="3.40.1260.10:FF:000002">
    <property type="entry name" value="Sulfurtransferase TusB"/>
    <property type="match status" value="1"/>
</dbReference>
<dbReference type="Gene3D" id="3.40.1260.10">
    <property type="entry name" value="DsrEFH-like"/>
    <property type="match status" value="1"/>
</dbReference>
<dbReference type="HAMAP" id="MF_01564">
    <property type="entry name" value="Thiourid_synth_B"/>
    <property type="match status" value="1"/>
</dbReference>
<dbReference type="InterPro" id="IPR027396">
    <property type="entry name" value="DsrEFH-like"/>
</dbReference>
<dbReference type="InterPro" id="IPR023526">
    <property type="entry name" value="Sulphur_relay_TusB"/>
</dbReference>
<dbReference type="InterPro" id="IPR007215">
    <property type="entry name" value="Sulphur_relay_TusB/DsrH"/>
</dbReference>
<dbReference type="NCBIfam" id="NF010035">
    <property type="entry name" value="PRK13510.1"/>
    <property type="match status" value="1"/>
</dbReference>
<dbReference type="NCBIfam" id="TIGR03011">
    <property type="entry name" value="sulf_tusB_dsrH"/>
    <property type="match status" value="1"/>
</dbReference>
<dbReference type="PANTHER" id="PTHR37526">
    <property type="entry name" value="PROTEIN TUSB"/>
    <property type="match status" value="1"/>
</dbReference>
<dbReference type="PANTHER" id="PTHR37526:SF1">
    <property type="entry name" value="PROTEIN TUSB"/>
    <property type="match status" value="1"/>
</dbReference>
<dbReference type="Pfam" id="PF04077">
    <property type="entry name" value="DsrH"/>
    <property type="match status" value="1"/>
</dbReference>
<dbReference type="SUPFAM" id="SSF75169">
    <property type="entry name" value="DsrEFH-like"/>
    <property type="match status" value="1"/>
</dbReference>
<gene>
    <name evidence="1" type="primary">tusB</name>
    <name type="ordered locus">ECED1_4003</name>
</gene>
<name>TUSB_ECO81</name>
<organism>
    <name type="scientific">Escherichia coli O81 (strain ED1a)</name>
    <dbReference type="NCBI Taxonomy" id="585397"/>
    <lineage>
        <taxon>Bacteria</taxon>
        <taxon>Pseudomonadati</taxon>
        <taxon>Pseudomonadota</taxon>
        <taxon>Gammaproteobacteria</taxon>
        <taxon>Enterobacterales</taxon>
        <taxon>Enterobacteriaceae</taxon>
        <taxon>Escherichia</taxon>
    </lineage>
</organism>
<evidence type="ECO:0000255" key="1">
    <source>
        <dbReference type="HAMAP-Rule" id="MF_01564"/>
    </source>
</evidence>
<keyword id="KW-0963">Cytoplasm</keyword>
<keyword id="KW-0819">tRNA processing</keyword>
<reference key="1">
    <citation type="journal article" date="2009" name="PLoS Genet.">
        <title>Organised genome dynamics in the Escherichia coli species results in highly diverse adaptive paths.</title>
        <authorList>
            <person name="Touchon M."/>
            <person name="Hoede C."/>
            <person name="Tenaillon O."/>
            <person name="Barbe V."/>
            <person name="Baeriswyl S."/>
            <person name="Bidet P."/>
            <person name="Bingen E."/>
            <person name="Bonacorsi S."/>
            <person name="Bouchier C."/>
            <person name="Bouvet O."/>
            <person name="Calteau A."/>
            <person name="Chiapello H."/>
            <person name="Clermont O."/>
            <person name="Cruveiller S."/>
            <person name="Danchin A."/>
            <person name="Diard M."/>
            <person name="Dossat C."/>
            <person name="Karoui M.E."/>
            <person name="Frapy E."/>
            <person name="Garry L."/>
            <person name="Ghigo J.M."/>
            <person name="Gilles A.M."/>
            <person name="Johnson J."/>
            <person name="Le Bouguenec C."/>
            <person name="Lescat M."/>
            <person name="Mangenot S."/>
            <person name="Martinez-Jehanne V."/>
            <person name="Matic I."/>
            <person name="Nassif X."/>
            <person name="Oztas S."/>
            <person name="Petit M.A."/>
            <person name="Pichon C."/>
            <person name="Rouy Z."/>
            <person name="Ruf C.S."/>
            <person name="Schneider D."/>
            <person name="Tourret J."/>
            <person name="Vacherie B."/>
            <person name="Vallenet D."/>
            <person name="Medigue C."/>
            <person name="Rocha E.P.C."/>
            <person name="Denamur E."/>
        </authorList>
    </citation>
    <scope>NUCLEOTIDE SEQUENCE [LARGE SCALE GENOMIC DNA]</scope>
    <source>
        <strain>ED1a</strain>
    </source>
</reference>
<protein>
    <recommendedName>
        <fullName evidence="1">Protein TusB</fullName>
    </recommendedName>
    <alternativeName>
        <fullName evidence="1">tRNA 2-thiouridine synthesizing protein B</fullName>
    </alternativeName>
</protein>
<comment type="function">
    <text evidence="1">Part of a sulfur-relay system required for 2-thiolation of 5-methylaminomethyl-2-thiouridine (mnm(5)s(2)U) at tRNA wobble positions.</text>
</comment>
<comment type="subunit">
    <text evidence="1">Heterohexamer, formed by a dimer of trimers. The hexameric TusBCD complex contains 2 copies each of TusB, TusC and TusD. The TusBCD complex interacts with TusE.</text>
</comment>
<comment type="subcellular location">
    <subcellularLocation>
        <location evidence="1">Cytoplasm</location>
    </subcellularLocation>
</comment>
<comment type="similarity">
    <text evidence="1">Belongs to the DsrH/TusB family.</text>
</comment>
<sequence length="95" mass="10710">MLHTLHRSPWLTDFAALLRLLSEGDELLLLQDGVTAAVDGNRYLESLRNAPIKVYALNEDLIARGLTGRISNDIISIDYTDFVRLTVKHSSQMAW</sequence>
<proteinExistence type="inferred from homology"/>
<feature type="chain" id="PRO_1000185450" description="Protein TusB">
    <location>
        <begin position="1"/>
        <end position="95"/>
    </location>
</feature>
<accession>B7N0X9</accession>